<keyword id="KW-0963">Cytoplasm</keyword>
<keyword id="KW-0342">GTP-binding</keyword>
<keyword id="KW-0378">Hydrolase</keyword>
<keyword id="KW-0460">Magnesium</keyword>
<keyword id="KW-0479">Metal-binding</keyword>
<keyword id="KW-0547">Nucleotide-binding</keyword>
<gene>
    <name evidence="1" type="primary">obg</name>
    <name type="ordered locus">BALH_4023</name>
</gene>
<protein>
    <recommendedName>
        <fullName evidence="1">GTPase Obg</fullName>
        <ecNumber evidence="1">3.6.5.-</ecNumber>
    </recommendedName>
    <alternativeName>
        <fullName evidence="1">GTP-binding protein Obg</fullName>
    </alternativeName>
</protein>
<reference key="1">
    <citation type="journal article" date="2007" name="J. Bacteriol.">
        <title>The complete genome sequence of Bacillus thuringiensis Al Hakam.</title>
        <authorList>
            <person name="Challacombe J.F."/>
            <person name="Altherr M.R."/>
            <person name="Xie G."/>
            <person name="Bhotika S.S."/>
            <person name="Brown N."/>
            <person name="Bruce D."/>
            <person name="Campbell C.S."/>
            <person name="Campbell M.L."/>
            <person name="Chen J."/>
            <person name="Chertkov O."/>
            <person name="Cleland C."/>
            <person name="Dimitrijevic M."/>
            <person name="Doggett N.A."/>
            <person name="Fawcett J.J."/>
            <person name="Glavina T."/>
            <person name="Goodwin L.A."/>
            <person name="Green L.D."/>
            <person name="Han C.S."/>
            <person name="Hill K.K."/>
            <person name="Hitchcock P."/>
            <person name="Jackson P.J."/>
            <person name="Keim P."/>
            <person name="Kewalramani A.R."/>
            <person name="Longmire J."/>
            <person name="Lucas S."/>
            <person name="Malfatti S."/>
            <person name="Martinez D."/>
            <person name="McMurry K."/>
            <person name="Meincke L.J."/>
            <person name="Misra M."/>
            <person name="Moseman B.L."/>
            <person name="Mundt M."/>
            <person name="Munk A.C."/>
            <person name="Okinaka R.T."/>
            <person name="Parson-Quintana B."/>
            <person name="Reilly L.P."/>
            <person name="Richardson P."/>
            <person name="Robinson D.L."/>
            <person name="Saunders E."/>
            <person name="Tapia R."/>
            <person name="Tesmer J.G."/>
            <person name="Thayer N."/>
            <person name="Thompson L.S."/>
            <person name="Tice H."/>
            <person name="Ticknor L.O."/>
            <person name="Wills P.L."/>
            <person name="Gilna P."/>
            <person name="Brettin T.S."/>
        </authorList>
    </citation>
    <scope>NUCLEOTIDE SEQUENCE [LARGE SCALE GENOMIC DNA]</scope>
    <source>
        <strain>Al Hakam</strain>
    </source>
</reference>
<name>OBG_BACAH</name>
<sequence>MFVDQVKIYVKGGDGGNGMVAYRREKYVPKGGPAGGDGGKGADVVFIVEEGLRTLMDFRYQRHFKADRGQHGMSKGQHGRKSEDLLVKVPPGTVVKDEKTGQILADLVTHGQTAVIAKGGRGGRGNSRFATATNPAPEIAENGEPGQERDVILELKVLADVGLVGFPSVGKSTLLSVVSSARPKIAEYHFTTIVPNLGVVETGDNRSFVMADLPGLIEGAHAGVGLGHQFLRHIERTRVIVHVIDMSGLEGRDPYEDYVTINNELKEYNLRLTERPQVVVANKMDMPDAEENLQAFKEKVGDEVKIFPISAVTKQGVRDLLFEVANLIETTPEFPIHEVVDESDTSVMYKFETEGVKFDITRESDGTFVISGYDIEKTFKMTDFSRDESVRRFARQMRGMGIDEALRARGAKDGDIVKILEYEFEFID</sequence>
<accession>A0RJ47</accession>
<evidence type="ECO:0000255" key="1">
    <source>
        <dbReference type="HAMAP-Rule" id="MF_01454"/>
    </source>
</evidence>
<evidence type="ECO:0000255" key="2">
    <source>
        <dbReference type="PROSITE-ProRule" id="PRU01229"/>
    </source>
</evidence>
<evidence type="ECO:0000255" key="3">
    <source>
        <dbReference type="PROSITE-ProRule" id="PRU01231"/>
    </source>
</evidence>
<feature type="chain" id="PRO_0000385728" description="GTPase Obg">
    <location>
        <begin position="1"/>
        <end position="428"/>
    </location>
</feature>
<feature type="domain" description="Obg" evidence="3">
    <location>
        <begin position="1"/>
        <end position="158"/>
    </location>
</feature>
<feature type="domain" description="OBG-type G" evidence="1">
    <location>
        <begin position="159"/>
        <end position="329"/>
    </location>
</feature>
<feature type="domain" description="OCT" evidence="2">
    <location>
        <begin position="350"/>
        <end position="428"/>
    </location>
</feature>
<feature type="binding site" evidence="1">
    <location>
        <begin position="165"/>
        <end position="172"/>
    </location>
    <ligand>
        <name>GTP</name>
        <dbReference type="ChEBI" id="CHEBI:37565"/>
    </ligand>
</feature>
<feature type="binding site" evidence="1">
    <location>
        <position position="172"/>
    </location>
    <ligand>
        <name>Mg(2+)</name>
        <dbReference type="ChEBI" id="CHEBI:18420"/>
    </ligand>
</feature>
<feature type="binding site" evidence="1">
    <location>
        <begin position="190"/>
        <end position="194"/>
    </location>
    <ligand>
        <name>GTP</name>
        <dbReference type="ChEBI" id="CHEBI:37565"/>
    </ligand>
</feature>
<feature type="binding site" evidence="1">
    <location>
        <position position="192"/>
    </location>
    <ligand>
        <name>Mg(2+)</name>
        <dbReference type="ChEBI" id="CHEBI:18420"/>
    </ligand>
</feature>
<feature type="binding site" evidence="1">
    <location>
        <begin position="212"/>
        <end position="215"/>
    </location>
    <ligand>
        <name>GTP</name>
        <dbReference type="ChEBI" id="CHEBI:37565"/>
    </ligand>
</feature>
<feature type="binding site" evidence="1">
    <location>
        <begin position="282"/>
        <end position="285"/>
    </location>
    <ligand>
        <name>GTP</name>
        <dbReference type="ChEBI" id="CHEBI:37565"/>
    </ligand>
</feature>
<feature type="binding site" evidence="1">
    <location>
        <begin position="310"/>
        <end position="312"/>
    </location>
    <ligand>
        <name>GTP</name>
        <dbReference type="ChEBI" id="CHEBI:37565"/>
    </ligand>
</feature>
<proteinExistence type="inferred from homology"/>
<comment type="function">
    <text evidence="1">An essential GTPase which binds GTP, GDP and possibly (p)ppGpp with moderate affinity, with high nucleotide exchange rates and a fairly low GTP hydrolysis rate. Plays a role in control of the cell cycle, stress response, ribosome biogenesis and in those bacteria that undergo differentiation, in morphogenesis control.</text>
</comment>
<comment type="cofactor">
    <cofactor evidence="1">
        <name>Mg(2+)</name>
        <dbReference type="ChEBI" id="CHEBI:18420"/>
    </cofactor>
</comment>
<comment type="subunit">
    <text evidence="1">Monomer.</text>
</comment>
<comment type="subcellular location">
    <subcellularLocation>
        <location evidence="1">Cytoplasm</location>
    </subcellularLocation>
</comment>
<comment type="similarity">
    <text evidence="1">Belongs to the TRAFAC class OBG-HflX-like GTPase superfamily. OBG GTPase family.</text>
</comment>
<organism>
    <name type="scientific">Bacillus thuringiensis (strain Al Hakam)</name>
    <dbReference type="NCBI Taxonomy" id="412694"/>
    <lineage>
        <taxon>Bacteria</taxon>
        <taxon>Bacillati</taxon>
        <taxon>Bacillota</taxon>
        <taxon>Bacilli</taxon>
        <taxon>Bacillales</taxon>
        <taxon>Bacillaceae</taxon>
        <taxon>Bacillus</taxon>
        <taxon>Bacillus cereus group</taxon>
    </lineage>
</organism>
<dbReference type="EC" id="3.6.5.-" evidence="1"/>
<dbReference type="EMBL" id="CP000485">
    <property type="protein sequence ID" value="ABK87240.1"/>
    <property type="molecule type" value="Genomic_DNA"/>
</dbReference>
<dbReference type="SMR" id="A0RJ47"/>
<dbReference type="KEGG" id="btl:BALH_4023"/>
<dbReference type="HOGENOM" id="CLU_011747_2_1_9"/>
<dbReference type="GO" id="GO:0005737">
    <property type="term" value="C:cytoplasm"/>
    <property type="evidence" value="ECO:0007669"/>
    <property type="project" value="UniProtKB-SubCell"/>
</dbReference>
<dbReference type="GO" id="GO:0005525">
    <property type="term" value="F:GTP binding"/>
    <property type="evidence" value="ECO:0007669"/>
    <property type="project" value="UniProtKB-UniRule"/>
</dbReference>
<dbReference type="GO" id="GO:0003924">
    <property type="term" value="F:GTPase activity"/>
    <property type="evidence" value="ECO:0007669"/>
    <property type="project" value="UniProtKB-UniRule"/>
</dbReference>
<dbReference type="GO" id="GO:0000287">
    <property type="term" value="F:magnesium ion binding"/>
    <property type="evidence" value="ECO:0007669"/>
    <property type="project" value="InterPro"/>
</dbReference>
<dbReference type="GO" id="GO:0042254">
    <property type="term" value="P:ribosome biogenesis"/>
    <property type="evidence" value="ECO:0007669"/>
    <property type="project" value="UniProtKB-UniRule"/>
</dbReference>
<dbReference type="CDD" id="cd01898">
    <property type="entry name" value="Obg"/>
    <property type="match status" value="1"/>
</dbReference>
<dbReference type="FunFam" id="2.70.210.12:FF:000001">
    <property type="entry name" value="GTPase Obg"/>
    <property type="match status" value="1"/>
</dbReference>
<dbReference type="FunFam" id="3.40.50.300:FF:000515">
    <property type="entry name" value="GTPase Obg"/>
    <property type="match status" value="1"/>
</dbReference>
<dbReference type="Gene3D" id="3.30.300.350">
    <property type="entry name" value="GTP-binding protein OBG, C-terminal domain"/>
    <property type="match status" value="1"/>
</dbReference>
<dbReference type="Gene3D" id="2.70.210.12">
    <property type="entry name" value="GTP1/OBG domain"/>
    <property type="match status" value="1"/>
</dbReference>
<dbReference type="Gene3D" id="3.40.50.300">
    <property type="entry name" value="P-loop containing nucleotide triphosphate hydrolases"/>
    <property type="match status" value="1"/>
</dbReference>
<dbReference type="HAMAP" id="MF_01454">
    <property type="entry name" value="GTPase_Obg"/>
    <property type="match status" value="1"/>
</dbReference>
<dbReference type="InterPro" id="IPR031167">
    <property type="entry name" value="G_OBG"/>
</dbReference>
<dbReference type="InterPro" id="IPR006073">
    <property type="entry name" value="GTP-bd"/>
</dbReference>
<dbReference type="InterPro" id="IPR014100">
    <property type="entry name" value="GTP-bd_Obg/CgtA"/>
</dbReference>
<dbReference type="InterPro" id="IPR036346">
    <property type="entry name" value="GTP-bd_prot_GTP1/OBG_C_sf"/>
</dbReference>
<dbReference type="InterPro" id="IPR006074">
    <property type="entry name" value="GTP1-OBG_CS"/>
</dbReference>
<dbReference type="InterPro" id="IPR006169">
    <property type="entry name" value="GTP1_OBG_dom"/>
</dbReference>
<dbReference type="InterPro" id="IPR036726">
    <property type="entry name" value="GTP1_OBG_dom_sf"/>
</dbReference>
<dbReference type="InterPro" id="IPR045086">
    <property type="entry name" value="OBG_GTPase"/>
</dbReference>
<dbReference type="InterPro" id="IPR015349">
    <property type="entry name" value="OCT_dom"/>
</dbReference>
<dbReference type="InterPro" id="IPR027417">
    <property type="entry name" value="P-loop_NTPase"/>
</dbReference>
<dbReference type="InterPro" id="IPR005225">
    <property type="entry name" value="Small_GTP-bd"/>
</dbReference>
<dbReference type="NCBIfam" id="TIGR02729">
    <property type="entry name" value="Obg_CgtA"/>
    <property type="match status" value="1"/>
</dbReference>
<dbReference type="NCBIfam" id="TIGR03595">
    <property type="entry name" value="Obg_CgtA_exten"/>
    <property type="match status" value="1"/>
</dbReference>
<dbReference type="NCBIfam" id="NF008954">
    <property type="entry name" value="PRK12296.1"/>
    <property type="match status" value="1"/>
</dbReference>
<dbReference type="NCBIfam" id="NF008955">
    <property type="entry name" value="PRK12297.1"/>
    <property type="match status" value="1"/>
</dbReference>
<dbReference type="NCBIfam" id="NF008956">
    <property type="entry name" value="PRK12299.1"/>
    <property type="match status" value="1"/>
</dbReference>
<dbReference type="NCBIfam" id="TIGR00231">
    <property type="entry name" value="small_GTP"/>
    <property type="match status" value="1"/>
</dbReference>
<dbReference type="PANTHER" id="PTHR11702">
    <property type="entry name" value="DEVELOPMENTALLY REGULATED GTP-BINDING PROTEIN-RELATED"/>
    <property type="match status" value="1"/>
</dbReference>
<dbReference type="PANTHER" id="PTHR11702:SF31">
    <property type="entry name" value="MITOCHONDRIAL RIBOSOME-ASSOCIATED GTPASE 2"/>
    <property type="match status" value="1"/>
</dbReference>
<dbReference type="Pfam" id="PF09269">
    <property type="entry name" value="DUF1967"/>
    <property type="match status" value="1"/>
</dbReference>
<dbReference type="Pfam" id="PF01018">
    <property type="entry name" value="GTP1_OBG"/>
    <property type="match status" value="1"/>
</dbReference>
<dbReference type="Pfam" id="PF01926">
    <property type="entry name" value="MMR_HSR1"/>
    <property type="match status" value="1"/>
</dbReference>
<dbReference type="PIRSF" id="PIRSF002401">
    <property type="entry name" value="GTP_bd_Obg/CgtA"/>
    <property type="match status" value="1"/>
</dbReference>
<dbReference type="PRINTS" id="PR00326">
    <property type="entry name" value="GTP1OBG"/>
</dbReference>
<dbReference type="SUPFAM" id="SSF102741">
    <property type="entry name" value="Obg GTP-binding protein C-terminal domain"/>
    <property type="match status" value="1"/>
</dbReference>
<dbReference type="SUPFAM" id="SSF82051">
    <property type="entry name" value="Obg GTP-binding protein N-terminal domain"/>
    <property type="match status" value="1"/>
</dbReference>
<dbReference type="SUPFAM" id="SSF52540">
    <property type="entry name" value="P-loop containing nucleoside triphosphate hydrolases"/>
    <property type="match status" value="1"/>
</dbReference>
<dbReference type="PROSITE" id="PS51710">
    <property type="entry name" value="G_OBG"/>
    <property type="match status" value="1"/>
</dbReference>
<dbReference type="PROSITE" id="PS00905">
    <property type="entry name" value="GTP1_OBG"/>
    <property type="match status" value="1"/>
</dbReference>
<dbReference type="PROSITE" id="PS51883">
    <property type="entry name" value="OBG"/>
    <property type="match status" value="1"/>
</dbReference>
<dbReference type="PROSITE" id="PS51881">
    <property type="entry name" value="OCT"/>
    <property type="match status" value="1"/>
</dbReference>